<keyword id="KW-0238">DNA-binding</keyword>
<keyword id="KW-0539">Nucleus</keyword>
<keyword id="KW-0597">Phosphoprotein</keyword>
<keyword id="KW-1185">Reference proteome</keyword>
<keyword id="KW-0804">Transcription</keyword>
<keyword id="KW-0805">Transcription regulation</keyword>
<sequence length="286" mass="32445">MASELAMTAELPTSPLAIEYVNDFDLMKFEVKKEPAEAERLCHRLPAGSLSSTPLSTPCSSVPSSPSFCAPSPGGQPSAGPTAAPLGSKPQLEELYWMSGYQHHLNPEALNLTPEDAVEALIGAPHHHHHHHQSYESFRPQPFGGEELPPAAHHHNAHHHHHHHHLRLEERFSDDQLVSMSVRELNRQLRGFSKEEVIRLKQNRRTLKNRGYAQSCRYKRVQQRHILENEKCQLQSQVEQLKQEVSRLAKERDLYKEKYEKLAARGFPREPSPPAAPKTTAADFFM</sequence>
<evidence type="ECO:0000250" key="1">
    <source>
        <dbReference type="UniProtKB" id="O57342"/>
    </source>
</evidence>
<evidence type="ECO:0000255" key="2">
    <source>
        <dbReference type="PROSITE-ProRule" id="PRU00978"/>
    </source>
</evidence>
<evidence type="ECO:0000256" key="3">
    <source>
        <dbReference type="SAM" id="MobiDB-lite"/>
    </source>
</evidence>
<evidence type="ECO:0000269" key="4">
    <source>
    </source>
</evidence>
<evidence type="ECO:0000269" key="5">
    <source>
    </source>
</evidence>
<evidence type="ECO:0000303" key="6">
    <source>
    </source>
</evidence>
<evidence type="ECO:0000305" key="7"/>
<feature type="chain" id="PRO_0000320276" description="Transcription factor MafA">
    <location>
        <begin position="1"/>
        <end position="286"/>
    </location>
</feature>
<feature type="domain" description="bZIP" evidence="2">
    <location>
        <begin position="199"/>
        <end position="262"/>
    </location>
</feature>
<feature type="region of interest" description="Disordered" evidence="3">
    <location>
        <begin position="51"/>
        <end position="87"/>
    </location>
</feature>
<feature type="region of interest" description="Disordered" evidence="3">
    <location>
        <begin position="126"/>
        <end position="167"/>
    </location>
</feature>
<feature type="region of interest" description="Basic motif">
    <location>
        <begin position="199"/>
        <end position="224"/>
    </location>
</feature>
<feature type="region of interest" description="Leucine-zipper">
    <location>
        <begin position="227"/>
        <end position="248"/>
    </location>
</feature>
<feature type="region of interest" description="Disordered" evidence="3">
    <location>
        <begin position="265"/>
        <end position="286"/>
    </location>
</feature>
<feature type="compositionally biased region" description="Low complexity" evidence="3">
    <location>
        <begin position="51"/>
        <end position="85"/>
    </location>
</feature>
<feature type="compositionally biased region" description="Basic residues" evidence="3">
    <location>
        <begin position="152"/>
        <end position="166"/>
    </location>
</feature>
<feature type="compositionally biased region" description="Low complexity" evidence="3">
    <location>
        <begin position="277"/>
        <end position="286"/>
    </location>
</feature>
<feature type="modified residue" description="Phosphoserine" evidence="1">
    <location>
        <position position="14"/>
    </location>
</feature>
<feature type="modified residue" description="Phosphoserine" evidence="1">
    <location>
        <position position="49"/>
    </location>
</feature>
<feature type="modified residue" description="Phosphothreonine" evidence="1">
    <location>
        <position position="53"/>
    </location>
</feature>
<feature type="modified residue" description="Phosphothreonine" evidence="1">
    <location>
        <position position="57"/>
    </location>
</feature>
<feature type="modified residue" description="Phosphoserine" evidence="1">
    <location>
        <position position="61"/>
    </location>
</feature>
<feature type="modified residue" description="Phosphoserine" evidence="1">
    <location>
        <position position="65"/>
    </location>
</feature>
<feature type="modified residue" description="Phosphothreonine" evidence="1">
    <location>
        <position position="113"/>
    </location>
</feature>
<feature type="modified residue" description="Phosphoserine" evidence="1">
    <location>
        <position position="272"/>
    </location>
</feature>
<feature type="mutagenesis site" description="Abolishes transactivation activity. when associated with A-65." evidence="4">
    <original>S</original>
    <variation>A</variation>
    <location>
        <position position="14"/>
    </location>
</feature>
<feature type="mutagenesis site" description="Abolishes transactivation activity; when associated with A-14." evidence="4">
    <original>S</original>
    <variation>A</variation>
    <location>
        <position position="65"/>
    </location>
</feature>
<feature type="sequence conflict" description="In Ref. 2; AAN75524." evidence="7" ref="2">
    <original>KF</original>
    <variation>NL</variation>
    <location>
        <begin position="28"/>
        <end position="29"/>
    </location>
</feature>
<feature type="sequence conflict" description="In Ref. 2; AAN75524." evidence="7" ref="2">
    <original>N</original>
    <variation>K</variation>
    <location>
        <position position="203"/>
    </location>
</feature>
<organism>
    <name type="scientific">Gallus gallus</name>
    <name type="common">Chicken</name>
    <dbReference type="NCBI Taxonomy" id="9031"/>
    <lineage>
        <taxon>Eukaryota</taxon>
        <taxon>Metazoa</taxon>
        <taxon>Chordata</taxon>
        <taxon>Craniata</taxon>
        <taxon>Vertebrata</taxon>
        <taxon>Euteleostomi</taxon>
        <taxon>Archelosauria</taxon>
        <taxon>Archosauria</taxon>
        <taxon>Dinosauria</taxon>
        <taxon>Saurischia</taxon>
        <taxon>Theropoda</taxon>
        <taxon>Coelurosauria</taxon>
        <taxon>Aves</taxon>
        <taxon>Neognathae</taxon>
        <taxon>Galloanserae</taxon>
        <taxon>Galliformes</taxon>
        <taxon>Phasianidae</taxon>
        <taxon>Phasianinae</taxon>
        <taxon>Gallus</taxon>
    </lineage>
</organism>
<reference key="1">
    <citation type="journal article" date="1998" name="Science">
        <title>Induction of lens differentiation by activation of a bZIP transcription factor, L-Maf.</title>
        <authorList>
            <person name="Ogino H."/>
            <person name="Yasuda K."/>
        </authorList>
    </citation>
    <scope>NUCLEOTIDE SEQUENCE [MRNA]</scope>
    <scope>FUNCTION</scope>
    <scope>DEVELOPMENTAL STAGE</scope>
    <source>
        <tissue>Lens</tissue>
    </source>
</reference>
<reference key="2">
    <citation type="journal article" date="2003" name="Oncogene">
        <title>MafA has strong cell transforming ability but is a weak transactivator.</title>
        <authorList>
            <person name="Nishizawa M."/>
            <person name="Kataoka K."/>
            <person name="Vogt P.K."/>
        </authorList>
    </citation>
    <scope>NUCLEOTIDE SEQUENCE [GENOMIC DNA]</scope>
    <scope>FUNCTION</scope>
    <scope>MUTAGENESIS OF SER-14 AND SER-65</scope>
</reference>
<dbReference type="EMBL" id="AF034570">
    <property type="protein sequence ID" value="AAC15781.1"/>
    <property type="molecule type" value="mRNA"/>
</dbReference>
<dbReference type="EMBL" id="AY152408">
    <property type="protein sequence ID" value="AAN75524.1"/>
    <property type="molecule type" value="Genomic_DNA"/>
</dbReference>
<dbReference type="RefSeq" id="NP_990356.1">
    <property type="nucleotide sequence ID" value="NM_205025.1"/>
</dbReference>
<dbReference type="SMR" id="O42290"/>
<dbReference type="FunCoup" id="O42290">
    <property type="interactions" value="8"/>
</dbReference>
<dbReference type="STRING" id="9031.ENSGALP00000042973"/>
<dbReference type="GlyGen" id="O42290">
    <property type="glycosylation" value="1 site"/>
</dbReference>
<dbReference type="iPTMnet" id="O42290"/>
<dbReference type="PaxDb" id="9031-ENSGALP00000042973"/>
<dbReference type="GeneID" id="395881"/>
<dbReference type="KEGG" id="gga:395881"/>
<dbReference type="CTD" id="389692"/>
<dbReference type="VEuPathDB" id="HostDB:geneid_395881"/>
<dbReference type="eggNOG" id="KOG4196">
    <property type="taxonomic scope" value="Eukaryota"/>
</dbReference>
<dbReference type="InParanoid" id="O42290"/>
<dbReference type="OMA" id="SYQHHLN"/>
<dbReference type="OrthoDB" id="5974330at2759"/>
<dbReference type="PhylomeDB" id="O42290"/>
<dbReference type="PRO" id="PR:O42290"/>
<dbReference type="Proteomes" id="UP000000539">
    <property type="component" value="Unassembled WGS sequence"/>
</dbReference>
<dbReference type="GO" id="GO:0005634">
    <property type="term" value="C:nucleus"/>
    <property type="evidence" value="ECO:0000318"/>
    <property type="project" value="GO_Central"/>
</dbReference>
<dbReference type="GO" id="GO:0000981">
    <property type="term" value="F:DNA-binding transcription factor activity, RNA polymerase II-specific"/>
    <property type="evidence" value="ECO:0000318"/>
    <property type="project" value="GO_Central"/>
</dbReference>
<dbReference type="GO" id="GO:0000978">
    <property type="term" value="F:RNA polymerase II cis-regulatory region sequence-specific DNA binding"/>
    <property type="evidence" value="ECO:0000318"/>
    <property type="project" value="GO_Central"/>
</dbReference>
<dbReference type="GO" id="GO:0030073">
    <property type="term" value="P:insulin secretion"/>
    <property type="evidence" value="ECO:0000318"/>
    <property type="project" value="GO_Central"/>
</dbReference>
<dbReference type="GO" id="GO:0006357">
    <property type="term" value="P:regulation of transcription by RNA polymerase II"/>
    <property type="evidence" value="ECO:0000318"/>
    <property type="project" value="GO_Central"/>
</dbReference>
<dbReference type="GO" id="GO:0009749">
    <property type="term" value="P:response to glucose"/>
    <property type="evidence" value="ECO:0000318"/>
    <property type="project" value="GO_Central"/>
</dbReference>
<dbReference type="CDD" id="cd14718">
    <property type="entry name" value="bZIP_Maf_large"/>
    <property type="match status" value="1"/>
</dbReference>
<dbReference type="FunFam" id="1.20.5.170:FF:000016">
    <property type="entry name" value="MAF bZIP transcription factor"/>
    <property type="match status" value="1"/>
</dbReference>
<dbReference type="Gene3D" id="1.20.5.170">
    <property type="match status" value="1"/>
</dbReference>
<dbReference type="InterPro" id="IPR004827">
    <property type="entry name" value="bZIP"/>
</dbReference>
<dbReference type="InterPro" id="IPR004826">
    <property type="entry name" value="bZIP_Maf"/>
</dbReference>
<dbReference type="InterPro" id="IPR046347">
    <property type="entry name" value="bZIP_sf"/>
</dbReference>
<dbReference type="InterPro" id="IPR013592">
    <property type="entry name" value="Maf_TF_N"/>
</dbReference>
<dbReference type="InterPro" id="IPR008917">
    <property type="entry name" value="TF_DNA-bd_sf"/>
</dbReference>
<dbReference type="InterPro" id="IPR024874">
    <property type="entry name" value="Transcription_factor_Maf_fam"/>
</dbReference>
<dbReference type="PANTHER" id="PTHR10129">
    <property type="entry name" value="TRANSCRIPTION FACTOR MAF"/>
    <property type="match status" value="1"/>
</dbReference>
<dbReference type="PANTHER" id="PTHR10129:SF30">
    <property type="entry name" value="TRANSCRIPTION FACTOR MAFA"/>
    <property type="match status" value="1"/>
</dbReference>
<dbReference type="Pfam" id="PF03131">
    <property type="entry name" value="bZIP_Maf"/>
    <property type="match status" value="1"/>
</dbReference>
<dbReference type="Pfam" id="PF08383">
    <property type="entry name" value="Maf_N"/>
    <property type="match status" value="1"/>
</dbReference>
<dbReference type="SMART" id="SM00338">
    <property type="entry name" value="BRLZ"/>
    <property type="match status" value="1"/>
</dbReference>
<dbReference type="SUPFAM" id="SSF47454">
    <property type="entry name" value="A DNA-binding domain in eukaryotic transcription factors"/>
    <property type="match status" value="1"/>
</dbReference>
<dbReference type="SUPFAM" id="SSF57959">
    <property type="entry name" value="Leucine zipper domain"/>
    <property type="match status" value="1"/>
</dbReference>
<dbReference type="PROSITE" id="PS50217">
    <property type="entry name" value="BZIP"/>
    <property type="match status" value="1"/>
</dbReference>
<gene>
    <name type="primary">MAFA</name>
</gene>
<proteinExistence type="evidence at protein level"/>
<comment type="function">
    <text evidence="4 5">Transcription factor involved in transcription regulation during lens development, including that of crystallin and filensin/BFSP1 genes (PubMed:9525857). Binds to CRE-type MARE 5'-TGCTGACGTCAGCA-3' and TRE-type MARE 5'-TGCTGACTCAGCA-3' DNA sequences (PubMed:12970735).</text>
</comment>
<comment type="subunit">
    <text evidence="1">Forms homodimers or heterodimers. May interact (via leucine-zipper domain) with MAFB. May interact with FOS and JUN. Interacts with PCAF; this interaction impairs MAFA ubiquitination.</text>
</comment>
<comment type="subcellular location">
    <subcellularLocation>
        <location evidence="2">Nucleus</location>
    </subcellularLocation>
</comment>
<comment type="developmental stage">
    <text evidence="5">First detected in the lens placode at stage 11, when the head ectoderm makes contact with the optic vesicle. The expression remains restricted to the invaginating lens placode, and subsequently to the developing lens vesicle. In 8-day old embryo, almost exclusively expressed in lens with very weak expression in brain.</text>
</comment>
<comment type="similarity">
    <text evidence="7">Belongs to the bZIP family. Maf subfamily.</text>
</comment>
<accession>O42290</accession>
<accession>Q8AWH8</accession>
<protein>
    <recommendedName>
        <fullName>Transcription factor MafA</fullName>
    </recommendedName>
    <alternativeName>
        <fullName evidence="6">Lens-specific Maf</fullName>
        <shortName>L-Maf</shortName>
    </alternativeName>
</protein>
<name>MAFA_CHICK</name>